<feature type="chain" id="PRO_0000239285" description="RNA demethylase ALKBH5">
    <location>
        <begin position="1"/>
        <end position="360"/>
    </location>
</feature>
<feature type="region of interest" description="Disordered" evidence="2">
    <location>
        <begin position="1"/>
        <end position="53"/>
    </location>
</feature>
<feature type="region of interest" description="Disordered" evidence="2">
    <location>
        <begin position="261"/>
        <end position="360"/>
    </location>
</feature>
<feature type="compositionally biased region" description="Basic and acidic residues" evidence="2">
    <location>
        <begin position="7"/>
        <end position="22"/>
    </location>
</feature>
<feature type="compositionally biased region" description="Acidic residues" evidence="2">
    <location>
        <begin position="32"/>
        <end position="48"/>
    </location>
</feature>
<feature type="compositionally biased region" description="Polar residues" evidence="2">
    <location>
        <begin position="264"/>
        <end position="280"/>
    </location>
</feature>
<feature type="compositionally biased region" description="Basic residues" evidence="2">
    <location>
        <begin position="281"/>
        <end position="290"/>
    </location>
</feature>
<feature type="compositionally biased region" description="Basic and acidic residues" evidence="2">
    <location>
        <begin position="291"/>
        <end position="312"/>
    </location>
</feature>
<feature type="compositionally biased region" description="Basic and acidic residues" evidence="2">
    <location>
        <begin position="330"/>
        <end position="340"/>
    </location>
</feature>
<feature type="active site" evidence="1">
    <location>
        <position position="107"/>
    </location>
</feature>
<feature type="binding site" evidence="1">
    <location>
        <position position="161"/>
    </location>
    <ligand>
        <name>2-oxoglutarate</name>
        <dbReference type="ChEBI" id="CHEBI:16810"/>
    </ligand>
</feature>
<feature type="binding site" evidence="1">
    <location>
        <position position="163"/>
    </location>
    <ligand>
        <name>2-oxoglutarate</name>
        <dbReference type="ChEBI" id="CHEBI:16810"/>
    </ligand>
</feature>
<feature type="binding site" evidence="1">
    <location>
        <position position="172"/>
    </location>
    <ligand>
        <name>2-oxoglutarate</name>
        <dbReference type="ChEBI" id="CHEBI:16810"/>
    </ligand>
</feature>
<feature type="binding site" evidence="1">
    <location>
        <position position="234"/>
    </location>
    <ligand>
        <name>2-oxoglutarate</name>
        <dbReference type="ChEBI" id="CHEBI:16810"/>
    </ligand>
</feature>
<feature type="binding site" evidence="1">
    <location>
        <position position="245"/>
    </location>
    <ligand>
        <name>2-oxoglutarate</name>
        <dbReference type="ChEBI" id="CHEBI:16810"/>
    </ligand>
</feature>
<feature type="disulfide bond" evidence="1">
    <location>
        <begin position="198"/>
        <end position="235"/>
    </location>
</feature>
<comment type="function">
    <text evidence="1">Dioxygenase that specifically demethylates N(6)-methyladenosine (m6A) RNA, the most prevalent internal modification of messenger RNA (mRNA) in higher eukaryotes. Demethylates RNA by oxidative demethylation, which requires molecular oxygen, alpha-ketoglutarate and iron. Demethylation of m6A mRNA affects mRNA processing, translation and export.</text>
</comment>
<comment type="catalytic activity">
    <reaction evidence="1">
        <text>an N(6)-methyladenosine in mRNA + 2-oxoglutarate + O2 = an adenosine in mRNA + formaldehyde + succinate + CO2</text>
        <dbReference type="Rhea" id="RHEA:49520"/>
        <dbReference type="Rhea" id="RHEA-COMP:12414"/>
        <dbReference type="Rhea" id="RHEA-COMP:12417"/>
        <dbReference type="ChEBI" id="CHEBI:15379"/>
        <dbReference type="ChEBI" id="CHEBI:16526"/>
        <dbReference type="ChEBI" id="CHEBI:16810"/>
        <dbReference type="ChEBI" id="CHEBI:16842"/>
        <dbReference type="ChEBI" id="CHEBI:30031"/>
        <dbReference type="ChEBI" id="CHEBI:74411"/>
        <dbReference type="ChEBI" id="CHEBI:74449"/>
        <dbReference type="EC" id="1.14.11.53"/>
    </reaction>
    <physiologicalReaction direction="left-to-right" evidence="1">
        <dbReference type="Rhea" id="RHEA:49521"/>
    </physiologicalReaction>
</comment>
<comment type="cofactor">
    <cofactor evidence="1">
        <name>Fe(2+)</name>
        <dbReference type="ChEBI" id="CHEBI:29033"/>
    </cofactor>
    <text evidence="1">Binds 1 Fe(2+) ion per subunit.</text>
</comment>
<comment type="subunit">
    <text evidence="1">Monomer.</text>
</comment>
<comment type="subcellular location">
    <subcellularLocation>
        <location evidence="1">Nucleus speckle</location>
    </subcellularLocation>
</comment>
<comment type="domain">
    <text evidence="1">The C-terminal disordered region undergoes liquid-liquid phase separation (LLPS) for the formation of paraspeckle membraneless compartment.</text>
</comment>
<comment type="similarity">
    <text evidence="3">Belongs to the alkB family.</text>
</comment>
<protein>
    <recommendedName>
        <fullName>RNA demethylase ALKBH5</fullName>
        <ecNumber evidence="1">1.14.11.53</ecNumber>
    </recommendedName>
    <alternativeName>
        <fullName>Alkylated DNA repair protein alkB homolog 5</fullName>
    </alternativeName>
    <alternativeName>
        <fullName>Alpha-ketoglutarate-dependent dioxygenase alkB homolog 5</fullName>
    </alternativeName>
</protein>
<organism>
    <name type="scientific">Xenopus laevis</name>
    <name type="common">African clawed frog</name>
    <dbReference type="NCBI Taxonomy" id="8355"/>
    <lineage>
        <taxon>Eukaryota</taxon>
        <taxon>Metazoa</taxon>
        <taxon>Chordata</taxon>
        <taxon>Craniata</taxon>
        <taxon>Vertebrata</taxon>
        <taxon>Euteleostomi</taxon>
        <taxon>Amphibia</taxon>
        <taxon>Batrachia</taxon>
        <taxon>Anura</taxon>
        <taxon>Pipoidea</taxon>
        <taxon>Pipidae</taxon>
        <taxon>Xenopodinae</taxon>
        <taxon>Xenopus</taxon>
        <taxon>Xenopus</taxon>
    </lineage>
</organism>
<keyword id="KW-0223">Dioxygenase</keyword>
<keyword id="KW-1015">Disulfide bond</keyword>
<keyword id="KW-0408">Iron</keyword>
<keyword id="KW-0479">Metal-binding</keyword>
<keyword id="KW-0539">Nucleus</keyword>
<keyword id="KW-0560">Oxidoreductase</keyword>
<keyword id="KW-1185">Reference proteome</keyword>
<proteinExistence type="evidence at transcript level"/>
<evidence type="ECO:0000250" key="1">
    <source>
        <dbReference type="UniProtKB" id="Q6P6C2"/>
    </source>
</evidence>
<evidence type="ECO:0000256" key="2">
    <source>
        <dbReference type="SAM" id="MobiDB-lite"/>
    </source>
</evidence>
<evidence type="ECO:0000305" key="3"/>
<reference key="1">
    <citation type="submission" date="2004-06" db="EMBL/GenBank/DDBJ databases">
        <authorList>
            <consortium name="NIH - Xenopus Gene Collection (XGC) project"/>
        </authorList>
    </citation>
    <scope>NUCLEOTIDE SEQUENCE [LARGE SCALE MRNA]</scope>
    <source>
        <tissue>Spleen</tissue>
    </source>
</reference>
<dbReference type="EC" id="1.14.11.53" evidence="1"/>
<dbReference type="EMBL" id="BC073226">
    <property type="protein sequence ID" value="AAH73226.1"/>
    <property type="molecule type" value="mRNA"/>
</dbReference>
<dbReference type="RefSeq" id="NP_001085704.1">
    <property type="nucleotide sequence ID" value="NM_001092235.1"/>
</dbReference>
<dbReference type="SMR" id="Q6GPB5"/>
<dbReference type="AGR" id="Xenbase:XB-GENE-987585"/>
<dbReference type="Xenbase" id="XB-GENE-987585">
    <property type="gene designation" value="alkbh5.L"/>
</dbReference>
<dbReference type="Proteomes" id="UP000186698">
    <property type="component" value="Unplaced"/>
</dbReference>
<dbReference type="Bgee" id="444130">
    <property type="expression patterns" value="Expressed in muscle tissue and 19 other cell types or tissues"/>
</dbReference>
<dbReference type="GO" id="GO:0016607">
    <property type="term" value="C:nuclear speck"/>
    <property type="evidence" value="ECO:0000250"/>
    <property type="project" value="UniProtKB"/>
</dbReference>
<dbReference type="GO" id="GO:0005634">
    <property type="term" value="C:nucleus"/>
    <property type="evidence" value="ECO:0000250"/>
    <property type="project" value="UniProtKB"/>
</dbReference>
<dbReference type="GO" id="GO:0042382">
    <property type="term" value="C:paraspeckles"/>
    <property type="evidence" value="ECO:0000250"/>
    <property type="project" value="UniProtKB"/>
</dbReference>
<dbReference type="GO" id="GO:0016706">
    <property type="term" value="F:2-oxoglutarate-dependent dioxygenase activity"/>
    <property type="evidence" value="ECO:0000250"/>
    <property type="project" value="UniProtKB"/>
</dbReference>
<dbReference type="GO" id="GO:0046872">
    <property type="term" value="F:metal ion binding"/>
    <property type="evidence" value="ECO:0007669"/>
    <property type="project" value="UniProtKB-KW"/>
</dbReference>
<dbReference type="GO" id="GO:0140693">
    <property type="term" value="F:molecular condensate scaffold activity"/>
    <property type="evidence" value="ECO:0000250"/>
    <property type="project" value="UniProtKB"/>
</dbReference>
<dbReference type="GO" id="GO:1990931">
    <property type="term" value="F:mRNA N6-methyladenosine dioxygenase activity"/>
    <property type="evidence" value="ECO:0000250"/>
    <property type="project" value="UniProtKB"/>
</dbReference>
<dbReference type="GO" id="GO:0035515">
    <property type="term" value="F:oxidative RNA demethylase activity"/>
    <property type="evidence" value="ECO:0000318"/>
    <property type="project" value="GO_Central"/>
</dbReference>
<dbReference type="GO" id="GO:0140694">
    <property type="term" value="P:membraneless organelle assembly"/>
    <property type="evidence" value="ECO:0000250"/>
    <property type="project" value="UniProtKB"/>
</dbReference>
<dbReference type="GO" id="GO:0061157">
    <property type="term" value="P:mRNA destabilization"/>
    <property type="evidence" value="ECO:0000250"/>
    <property type="project" value="UniProtKB"/>
</dbReference>
<dbReference type="GO" id="GO:0006406">
    <property type="term" value="P:mRNA export from nucleus"/>
    <property type="evidence" value="ECO:0007669"/>
    <property type="project" value="TreeGrafter"/>
</dbReference>
<dbReference type="GO" id="GO:0006397">
    <property type="term" value="P:mRNA processing"/>
    <property type="evidence" value="ECO:0007669"/>
    <property type="project" value="InterPro"/>
</dbReference>
<dbReference type="GO" id="GO:0010793">
    <property type="term" value="P:regulation of mRNA export from nucleus"/>
    <property type="evidence" value="ECO:0000250"/>
    <property type="project" value="UniProtKB"/>
</dbReference>
<dbReference type="GO" id="GO:0050684">
    <property type="term" value="P:regulation of mRNA processing"/>
    <property type="evidence" value="ECO:0000250"/>
    <property type="project" value="UniProtKB"/>
</dbReference>
<dbReference type="GO" id="GO:0006417">
    <property type="term" value="P:regulation of translation"/>
    <property type="evidence" value="ECO:0000250"/>
    <property type="project" value="UniProtKB"/>
</dbReference>
<dbReference type="GO" id="GO:0001666">
    <property type="term" value="P:response to hypoxia"/>
    <property type="evidence" value="ECO:0000250"/>
    <property type="project" value="UniProtKB"/>
</dbReference>
<dbReference type="GO" id="GO:0007283">
    <property type="term" value="P:spermatogenesis"/>
    <property type="evidence" value="ECO:0000250"/>
    <property type="project" value="UniProtKB"/>
</dbReference>
<dbReference type="FunFam" id="2.60.120.590:FF:000002">
    <property type="entry name" value="RNA demethylase ALKBH5"/>
    <property type="match status" value="1"/>
</dbReference>
<dbReference type="Gene3D" id="2.60.120.590">
    <property type="entry name" value="Alpha-ketoglutarate-dependent dioxygenase AlkB-like"/>
    <property type="match status" value="1"/>
</dbReference>
<dbReference type="InterPro" id="IPR027450">
    <property type="entry name" value="AlkB-like"/>
</dbReference>
<dbReference type="InterPro" id="IPR037151">
    <property type="entry name" value="AlkB-like_sf"/>
</dbReference>
<dbReference type="InterPro" id="IPR032860">
    <property type="entry name" value="ALKBH5"/>
</dbReference>
<dbReference type="PANTHER" id="PTHR32074">
    <property type="entry name" value="RNA DEMETHYLASE ALKBH5"/>
    <property type="match status" value="1"/>
</dbReference>
<dbReference type="PANTHER" id="PTHR32074:SF2">
    <property type="entry name" value="RNA DEMETHYLASE ALKBH5"/>
    <property type="match status" value="1"/>
</dbReference>
<dbReference type="Pfam" id="PF13532">
    <property type="entry name" value="2OG-FeII_Oxy_2"/>
    <property type="match status" value="1"/>
</dbReference>
<dbReference type="SUPFAM" id="SSF51197">
    <property type="entry name" value="Clavaminate synthase-like"/>
    <property type="match status" value="1"/>
</dbReference>
<gene>
    <name type="primary">alkbh5</name>
</gene>
<sequence length="360" mass="41749">MSATYTDLREKLQSLNRDSPKEVRKRKQPASDTEEEDEAGSEPEAEEEEARKVRSGIRQMRLFSPDECAAIESKIDEVVSRADKGLYQEHTVDRAPLRNKYFFGEGYTYGAQLQRRGPGQERLYPKGEVDEIPGWVHELVIRRLVERRIIPEGFVNSAVINDYQPGGCIVSHVDPIHIFERPIVSVSFFSDSALCFGCKFQFKPIRVSEPVFFLPVRRGSVTVLSGYAADEITHCIRPQDIKERRAVVILRKTRTEAPRLEMKSLSSSYQPERLQGSNRQHILKPKRSHRKADPDAAHRPRILEMDKEENRRSVLLPKQRRRSHFSSENYWRRSHDHVDTYTETGEDEGSPVRKVKMRRH</sequence>
<name>ALKB5_XENLA</name>
<accession>Q6GPB5</accession>